<accession>B5RBW2</accession>
<dbReference type="EC" id="3.5.4.13" evidence="1"/>
<dbReference type="EMBL" id="AM933173">
    <property type="protein sequence ID" value="CAR37993.1"/>
    <property type="molecule type" value="Genomic_DNA"/>
</dbReference>
<dbReference type="RefSeq" id="WP_001234783.1">
    <property type="nucleotide sequence ID" value="NC_011274.1"/>
</dbReference>
<dbReference type="SMR" id="B5RBW2"/>
<dbReference type="KEGG" id="seg:SG2153"/>
<dbReference type="HOGENOM" id="CLU_087476_2_0_6"/>
<dbReference type="UniPathway" id="UPA00610">
    <property type="reaction ID" value="UER00665"/>
</dbReference>
<dbReference type="Proteomes" id="UP000008321">
    <property type="component" value="Chromosome"/>
</dbReference>
<dbReference type="GO" id="GO:0008829">
    <property type="term" value="F:dCTP deaminase activity"/>
    <property type="evidence" value="ECO:0007669"/>
    <property type="project" value="UniProtKB-UniRule"/>
</dbReference>
<dbReference type="GO" id="GO:0000166">
    <property type="term" value="F:nucleotide binding"/>
    <property type="evidence" value="ECO:0007669"/>
    <property type="project" value="UniProtKB-KW"/>
</dbReference>
<dbReference type="GO" id="GO:0006226">
    <property type="term" value="P:dUMP biosynthetic process"/>
    <property type="evidence" value="ECO:0007669"/>
    <property type="project" value="UniProtKB-UniPathway"/>
</dbReference>
<dbReference type="GO" id="GO:0006229">
    <property type="term" value="P:dUTP biosynthetic process"/>
    <property type="evidence" value="ECO:0007669"/>
    <property type="project" value="UniProtKB-UniRule"/>
</dbReference>
<dbReference type="GO" id="GO:0015949">
    <property type="term" value="P:nucleobase-containing small molecule interconversion"/>
    <property type="evidence" value="ECO:0007669"/>
    <property type="project" value="TreeGrafter"/>
</dbReference>
<dbReference type="CDD" id="cd07557">
    <property type="entry name" value="trimeric_dUTPase"/>
    <property type="match status" value="1"/>
</dbReference>
<dbReference type="FunFam" id="2.70.40.10:FF:000003">
    <property type="entry name" value="dCTP deaminase"/>
    <property type="match status" value="1"/>
</dbReference>
<dbReference type="Gene3D" id="2.70.40.10">
    <property type="match status" value="1"/>
</dbReference>
<dbReference type="HAMAP" id="MF_00146">
    <property type="entry name" value="dCTP_deaminase"/>
    <property type="match status" value="1"/>
</dbReference>
<dbReference type="InterPro" id="IPR011962">
    <property type="entry name" value="dCTP_deaminase"/>
</dbReference>
<dbReference type="InterPro" id="IPR036157">
    <property type="entry name" value="dUTPase-like_sf"/>
</dbReference>
<dbReference type="InterPro" id="IPR033704">
    <property type="entry name" value="dUTPase_trimeric"/>
</dbReference>
<dbReference type="NCBIfam" id="TIGR02274">
    <property type="entry name" value="dCTP_deam"/>
    <property type="match status" value="1"/>
</dbReference>
<dbReference type="PANTHER" id="PTHR42680">
    <property type="entry name" value="DCTP DEAMINASE"/>
    <property type="match status" value="1"/>
</dbReference>
<dbReference type="PANTHER" id="PTHR42680:SF3">
    <property type="entry name" value="DCTP DEAMINASE"/>
    <property type="match status" value="1"/>
</dbReference>
<dbReference type="Pfam" id="PF22769">
    <property type="entry name" value="DCD"/>
    <property type="match status" value="1"/>
</dbReference>
<dbReference type="SUPFAM" id="SSF51283">
    <property type="entry name" value="dUTPase-like"/>
    <property type="match status" value="1"/>
</dbReference>
<keyword id="KW-0378">Hydrolase</keyword>
<keyword id="KW-0546">Nucleotide metabolism</keyword>
<keyword id="KW-0547">Nucleotide-binding</keyword>
<name>DCD_SALG2</name>
<protein>
    <recommendedName>
        <fullName evidence="1">dCTP deaminase</fullName>
        <ecNumber evidence="1">3.5.4.13</ecNumber>
    </recommendedName>
    <alternativeName>
        <fullName evidence="1">Deoxycytidine triphosphate deaminase</fullName>
    </alternativeName>
</protein>
<proteinExistence type="inferred from homology"/>
<evidence type="ECO:0000255" key="1">
    <source>
        <dbReference type="HAMAP-Rule" id="MF_00146"/>
    </source>
</evidence>
<evidence type="ECO:0000256" key="2">
    <source>
        <dbReference type="SAM" id="MobiDB-lite"/>
    </source>
</evidence>
<reference key="1">
    <citation type="journal article" date="2008" name="Genome Res.">
        <title>Comparative genome analysis of Salmonella enteritidis PT4 and Salmonella gallinarum 287/91 provides insights into evolutionary and host adaptation pathways.</title>
        <authorList>
            <person name="Thomson N.R."/>
            <person name="Clayton D.J."/>
            <person name="Windhorst D."/>
            <person name="Vernikos G."/>
            <person name="Davidson S."/>
            <person name="Churcher C."/>
            <person name="Quail M.A."/>
            <person name="Stevens M."/>
            <person name="Jones M.A."/>
            <person name="Watson M."/>
            <person name="Barron A."/>
            <person name="Layton A."/>
            <person name="Pickard D."/>
            <person name="Kingsley R.A."/>
            <person name="Bignell A."/>
            <person name="Clark L."/>
            <person name="Harris B."/>
            <person name="Ormond D."/>
            <person name="Abdellah Z."/>
            <person name="Brooks K."/>
            <person name="Cherevach I."/>
            <person name="Chillingworth T."/>
            <person name="Woodward J."/>
            <person name="Norberczak H."/>
            <person name="Lord A."/>
            <person name="Arrowsmith C."/>
            <person name="Jagels K."/>
            <person name="Moule S."/>
            <person name="Mungall K."/>
            <person name="Saunders M."/>
            <person name="Whitehead S."/>
            <person name="Chabalgoity J.A."/>
            <person name="Maskell D."/>
            <person name="Humphreys T."/>
            <person name="Roberts M."/>
            <person name="Barrow P.A."/>
            <person name="Dougan G."/>
            <person name="Parkhill J."/>
        </authorList>
    </citation>
    <scope>NUCLEOTIDE SEQUENCE [LARGE SCALE GENOMIC DNA]</scope>
    <source>
        <strain>287/91 / NCTC 13346</strain>
    </source>
</reference>
<gene>
    <name evidence="1" type="primary">dcd</name>
    <name type="ordered locus">SG2153</name>
</gene>
<organism>
    <name type="scientific">Salmonella gallinarum (strain 287/91 / NCTC 13346)</name>
    <dbReference type="NCBI Taxonomy" id="550538"/>
    <lineage>
        <taxon>Bacteria</taxon>
        <taxon>Pseudomonadati</taxon>
        <taxon>Pseudomonadota</taxon>
        <taxon>Gammaproteobacteria</taxon>
        <taxon>Enterobacterales</taxon>
        <taxon>Enterobacteriaceae</taxon>
        <taxon>Salmonella</taxon>
    </lineage>
</organism>
<sequence>MRLCDRDIEAWLDEGRLSITPRPPVERINGATVDVRLGNKFRTFRGHTAAFIDLSGPKDEVSAALDRVMSDEIVLPDGEAFYLHPGELALAVTFESVTLPPDLVGWLDGRSSLARLGLMVHVTAHRIDPGWSGCIVLEFYNSGKLPLALRPGMLIGALSFEPLSGPAARPYNRRQDAKYRDQQGAVASRIDKD</sequence>
<comment type="function">
    <text evidence="1">Catalyzes the deamination of dCTP to dUTP.</text>
</comment>
<comment type="catalytic activity">
    <reaction evidence="1">
        <text>dCTP + H2O + H(+) = dUTP + NH4(+)</text>
        <dbReference type="Rhea" id="RHEA:22680"/>
        <dbReference type="ChEBI" id="CHEBI:15377"/>
        <dbReference type="ChEBI" id="CHEBI:15378"/>
        <dbReference type="ChEBI" id="CHEBI:28938"/>
        <dbReference type="ChEBI" id="CHEBI:61481"/>
        <dbReference type="ChEBI" id="CHEBI:61555"/>
        <dbReference type="EC" id="3.5.4.13"/>
    </reaction>
</comment>
<comment type="pathway">
    <text evidence="1">Pyrimidine metabolism; dUMP biosynthesis; dUMP from dCTP (dUTP route): step 1/2.</text>
</comment>
<comment type="subunit">
    <text evidence="1">Homotrimer.</text>
</comment>
<comment type="similarity">
    <text evidence="1">Belongs to the dCTP deaminase family.</text>
</comment>
<feature type="chain" id="PRO_1000096449" description="dCTP deaminase">
    <location>
        <begin position="1"/>
        <end position="193"/>
    </location>
</feature>
<feature type="region of interest" description="Disordered" evidence="2">
    <location>
        <begin position="169"/>
        <end position="193"/>
    </location>
</feature>
<feature type="active site" description="Proton donor/acceptor" evidence="1">
    <location>
        <position position="138"/>
    </location>
</feature>
<feature type="binding site" evidence="1">
    <location>
        <begin position="110"/>
        <end position="115"/>
    </location>
    <ligand>
        <name>dCTP</name>
        <dbReference type="ChEBI" id="CHEBI:61481"/>
    </ligand>
</feature>
<feature type="binding site" evidence="1">
    <location>
        <position position="128"/>
    </location>
    <ligand>
        <name>dCTP</name>
        <dbReference type="ChEBI" id="CHEBI:61481"/>
    </ligand>
</feature>
<feature type="binding site" evidence="1">
    <location>
        <begin position="136"/>
        <end position="138"/>
    </location>
    <ligand>
        <name>dCTP</name>
        <dbReference type="ChEBI" id="CHEBI:61481"/>
    </ligand>
</feature>
<feature type="binding site" evidence="1">
    <location>
        <position position="171"/>
    </location>
    <ligand>
        <name>dCTP</name>
        <dbReference type="ChEBI" id="CHEBI:61481"/>
    </ligand>
</feature>
<feature type="binding site" evidence="1">
    <location>
        <position position="178"/>
    </location>
    <ligand>
        <name>dCTP</name>
        <dbReference type="ChEBI" id="CHEBI:61481"/>
    </ligand>
</feature>
<feature type="binding site" evidence="1">
    <location>
        <position position="182"/>
    </location>
    <ligand>
        <name>dCTP</name>
        <dbReference type="ChEBI" id="CHEBI:61481"/>
    </ligand>
</feature>